<proteinExistence type="inferred from homology"/>
<evidence type="ECO:0000250" key="1"/>
<evidence type="ECO:0000256" key="2">
    <source>
        <dbReference type="SAM" id="MobiDB-lite"/>
    </source>
</evidence>
<evidence type="ECO:0000305" key="3"/>
<protein>
    <recommendedName>
        <fullName>DNA replication regulator SLD2</fullName>
    </recommendedName>
</protein>
<organism>
    <name type="scientific">Eremothecium gossypii (strain ATCC 10895 / CBS 109.51 / FGSC 9923 / NRRL Y-1056)</name>
    <name type="common">Yeast</name>
    <name type="synonym">Ashbya gossypii</name>
    <dbReference type="NCBI Taxonomy" id="284811"/>
    <lineage>
        <taxon>Eukaryota</taxon>
        <taxon>Fungi</taxon>
        <taxon>Dikarya</taxon>
        <taxon>Ascomycota</taxon>
        <taxon>Saccharomycotina</taxon>
        <taxon>Saccharomycetes</taxon>
        <taxon>Saccharomycetales</taxon>
        <taxon>Saccharomycetaceae</taxon>
        <taxon>Eremothecium</taxon>
    </lineage>
</organism>
<feature type="chain" id="PRO_0000278428" description="DNA replication regulator SLD2">
    <location>
        <begin position="1"/>
        <end position="379"/>
    </location>
</feature>
<feature type="region of interest" description="Disordered" evidence="2">
    <location>
        <begin position="60"/>
        <end position="79"/>
    </location>
</feature>
<feature type="region of interest" description="Disordered" evidence="2">
    <location>
        <begin position="263"/>
        <end position="292"/>
    </location>
</feature>
<feature type="region of interest" description="Disordered" evidence="2">
    <location>
        <begin position="322"/>
        <end position="379"/>
    </location>
</feature>
<feature type="compositionally biased region" description="Polar residues" evidence="2">
    <location>
        <begin position="67"/>
        <end position="78"/>
    </location>
</feature>
<feature type="compositionally biased region" description="Acidic residues" evidence="2">
    <location>
        <begin position="266"/>
        <end position="276"/>
    </location>
</feature>
<name>SLD2_EREGS</name>
<sequence>MSRTSAGELDVLKVQLKTWERQFLEENGRSPIKEDIKAHPEIRRKYKEYTSLKKLLSKGNAAVTGQKHGSPSRATHPTPQKHIDAEIELGPTPQIYGKVVSLFEMHISPLKKVPVRQLDADSSETCISPDLHSQDVAQSELLTDISCQAKRQLDFSVTPHASPVKAVQPLLLNAPDLRFEAIPHARTKYGPNSPVKFDGDVTLTLSQTPLQAKLAQASEGYSPSPLIKRPAKPLSQLAKEYEDIVEELKEVDHAAAVRNLGGLLQQEEENTQEAEAAEPSATRSDRKRRKNKVRPALVTLEEEIPQGNLHEQLVKLRQKALDKFNGNDPNDSSDEEKKTSATSAKPAKARKRKYNTVSDNFRRLKLPTKNTRNGRWRRR</sequence>
<reference key="1">
    <citation type="journal article" date="2004" name="Science">
        <title>The Ashbya gossypii genome as a tool for mapping the ancient Saccharomyces cerevisiae genome.</title>
        <authorList>
            <person name="Dietrich F.S."/>
            <person name="Voegeli S."/>
            <person name="Brachat S."/>
            <person name="Lerch A."/>
            <person name="Gates K."/>
            <person name="Steiner S."/>
            <person name="Mohr C."/>
            <person name="Poehlmann R."/>
            <person name="Luedi P."/>
            <person name="Choi S."/>
            <person name="Wing R.A."/>
            <person name="Flavier A."/>
            <person name="Gaffney T.D."/>
            <person name="Philippsen P."/>
        </authorList>
    </citation>
    <scope>NUCLEOTIDE SEQUENCE [LARGE SCALE GENOMIC DNA]</scope>
    <source>
        <strain>ATCC 10895 / CBS 109.51 / FGSC 9923 / NRRL Y-1056</strain>
    </source>
</reference>
<reference key="2">
    <citation type="journal article" date="2013" name="G3 (Bethesda)">
        <title>Genomes of Ashbya fungi isolated from insects reveal four mating-type loci, numerous translocations, lack of transposons, and distinct gene duplications.</title>
        <authorList>
            <person name="Dietrich F.S."/>
            <person name="Voegeli S."/>
            <person name="Kuo S."/>
            <person name="Philippsen P."/>
        </authorList>
    </citation>
    <scope>GENOME REANNOTATION</scope>
    <source>
        <strain>ATCC 10895 / CBS 109.51 / FGSC 9923 / NRRL Y-1056</strain>
    </source>
</reference>
<keyword id="KW-0131">Cell cycle</keyword>
<keyword id="KW-0963">Cytoplasm</keyword>
<keyword id="KW-0235">DNA replication</keyword>
<keyword id="KW-0539">Nucleus</keyword>
<keyword id="KW-1185">Reference proteome</keyword>
<dbReference type="EMBL" id="AE016815">
    <property type="protein sequence ID" value="AAS50726.1"/>
    <property type="molecule type" value="Genomic_DNA"/>
</dbReference>
<dbReference type="RefSeq" id="NP_982902.1">
    <property type="nucleotide sequence ID" value="NM_208255.1"/>
</dbReference>
<dbReference type="SMR" id="Q75DR2"/>
<dbReference type="FunCoup" id="Q75DR2">
    <property type="interactions" value="60"/>
</dbReference>
<dbReference type="STRING" id="284811.Q75DR2"/>
<dbReference type="EnsemblFungi" id="AAS50726">
    <property type="protein sequence ID" value="AAS50726"/>
    <property type="gene ID" value="AGOS_ABL045W"/>
</dbReference>
<dbReference type="GeneID" id="4618985"/>
<dbReference type="KEGG" id="ago:AGOS_ABL045W"/>
<dbReference type="eggNOG" id="ENOG502SCF7">
    <property type="taxonomic scope" value="Eukaryota"/>
</dbReference>
<dbReference type="HOGENOM" id="CLU_057728_0_0_1"/>
<dbReference type="InParanoid" id="Q75DR2"/>
<dbReference type="OMA" id="TWEHDFI"/>
<dbReference type="OrthoDB" id="8775810at2759"/>
<dbReference type="Proteomes" id="UP000000591">
    <property type="component" value="Chromosome II"/>
</dbReference>
<dbReference type="GO" id="GO:0005737">
    <property type="term" value="C:cytoplasm"/>
    <property type="evidence" value="ECO:0007669"/>
    <property type="project" value="UniProtKB-SubCell"/>
</dbReference>
<dbReference type="GO" id="GO:0031261">
    <property type="term" value="C:DNA replication preinitiation complex"/>
    <property type="evidence" value="ECO:0000318"/>
    <property type="project" value="GO_Central"/>
</dbReference>
<dbReference type="GO" id="GO:0003688">
    <property type="term" value="F:DNA replication origin binding"/>
    <property type="evidence" value="ECO:0000318"/>
    <property type="project" value="GO_Central"/>
</dbReference>
<dbReference type="GO" id="GO:0003697">
    <property type="term" value="F:single-stranded DNA binding"/>
    <property type="evidence" value="ECO:0000318"/>
    <property type="project" value="GO_Central"/>
</dbReference>
<dbReference type="GO" id="GO:0006270">
    <property type="term" value="P:DNA replication initiation"/>
    <property type="evidence" value="ECO:0000318"/>
    <property type="project" value="GO_Central"/>
</dbReference>
<dbReference type="GO" id="GO:0000727">
    <property type="term" value="P:double-strand break repair via break-induced replication"/>
    <property type="evidence" value="ECO:0000318"/>
    <property type="project" value="GO_Central"/>
</dbReference>
<dbReference type="GO" id="GO:0033314">
    <property type="term" value="P:mitotic DNA replication checkpoint signaling"/>
    <property type="evidence" value="ECO:0007669"/>
    <property type="project" value="EnsemblFungi"/>
</dbReference>
<dbReference type="GO" id="GO:1902977">
    <property type="term" value="P:mitotic DNA replication preinitiation complex assembly"/>
    <property type="evidence" value="ECO:0000318"/>
    <property type="project" value="GO_Central"/>
</dbReference>
<dbReference type="GO" id="GO:0031333">
    <property type="term" value="P:negative regulation of protein-containing complex assembly"/>
    <property type="evidence" value="ECO:0007669"/>
    <property type="project" value="EnsemblFungi"/>
</dbReference>
<dbReference type="CDD" id="cd22289">
    <property type="entry name" value="RecQL4_SLD2_NTD"/>
    <property type="match status" value="1"/>
</dbReference>
<dbReference type="FunFam" id="1.10.10.1460:FF:000001">
    <property type="entry name" value="DNA replication regulator Sld2"/>
    <property type="match status" value="1"/>
</dbReference>
<dbReference type="Gene3D" id="1.10.10.1460">
    <property type="match status" value="1"/>
</dbReference>
<dbReference type="InterPro" id="IPR021110">
    <property type="entry name" value="DNA_rep_checkpnt_protein"/>
</dbReference>
<dbReference type="InterPro" id="IPR040203">
    <property type="entry name" value="Sld2"/>
</dbReference>
<dbReference type="PANTHER" id="PTHR28124">
    <property type="entry name" value="DNA REPLICATION REGULATOR SLD2"/>
    <property type="match status" value="1"/>
</dbReference>
<dbReference type="PANTHER" id="PTHR28124:SF1">
    <property type="entry name" value="DNA REPLICATION REGULATOR SLD2"/>
    <property type="match status" value="1"/>
</dbReference>
<dbReference type="Pfam" id="PF11719">
    <property type="entry name" value="Drc1-Sld2"/>
    <property type="match status" value="1"/>
</dbReference>
<accession>Q75DR2</accession>
<comment type="function">
    <text evidence="1">Has a role in the initiation of DNA replication. Required at S-phase checkpoint (By similarity).</text>
</comment>
<comment type="subcellular location">
    <subcellularLocation>
        <location>Cytoplasm</location>
    </subcellularLocation>
    <subcellularLocation>
        <location evidence="1">Nucleus</location>
    </subcellularLocation>
</comment>
<comment type="similarity">
    <text evidence="3">Belongs to the SLD2 family.</text>
</comment>
<gene>
    <name type="primary">SLD2</name>
    <name type="ordered locus">ABL045W</name>
</gene>